<reference key="1">
    <citation type="journal article" date="2011" name="PLoS Genet.">
        <title>Genomic analysis of the necrotrophic fungal pathogens Sclerotinia sclerotiorum and Botrytis cinerea.</title>
        <authorList>
            <person name="Amselem J."/>
            <person name="Cuomo C.A."/>
            <person name="van Kan J.A.L."/>
            <person name="Viaud M."/>
            <person name="Benito E.P."/>
            <person name="Couloux A."/>
            <person name="Coutinho P.M."/>
            <person name="de Vries R.P."/>
            <person name="Dyer P.S."/>
            <person name="Fillinger S."/>
            <person name="Fournier E."/>
            <person name="Gout L."/>
            <person name="Hahn M."/>
            <person name="Kohn L."/>
            <person name="Lapalu N."/>
            <person name="Plummer K.M."/>
            <person name="Pradier J.-M."/>
            <person name="Quevillon E."/>
            <person name="Sharon A."/>
            <person name="Simon A."/>
            <person name="ten Have A."/>
            <person name="Tudzynski B."/>
            <person name="Tudzynski P."/>
            <person name="Wincker P."/>
            <person name="Andrew M."/>
            <person name="Anthouard V."/>
            <person name="Beever R.E."/>
            <person name="Beffa R."/>
            <person name="Benoit I."/>
            <person name="Bouzid O."/>
            <person name="Brault B."/>
            <person name="Chen Z."/>
            <person name="Choquer M."/>
            <person name="Collemare J."/>
            <person name="Cotton P."/>
            <person name="Danchin E.G."/>
            <person name="Da Silva C."/>
            <person name="Gautier A."/>
            <person name="Giraud C."/>
            <person name="Giraud T."/>
            <person name="Gonzalez C."/>
            <person name="Grossetete S."/>
            <person name="Gueldener U."/>
            <person name="Henrissat B."/>
            <person name="Howlett B.J."/>
            <person name="Kodira C."/>
            <person name="Kretschmer M."/>
            <person name="Lappartient A."/>
            <person name="Leroch M."/>
            <person name="Levis C."/>
            <person name="Mauceli E."/>
            <person name="Neuveglise C."/>
            <person name="Oeser B."/>
            <person name="Pearson M."/>
            <person name="Poulain J."/>
            <person name="Poussereau N."/>
            <person name="Quesneville H."/>
            <person name="Rascle C."/>
            <person name="Schumacher J."/>
            <person name="Segurens B."/>
            <person name="Sexton A."/>
            <person name="Silva E."/>
            <person name="Sirven C."/>
            <person name="Soanes D.M."/>
            <person name="Talbot N.J."/>
            <person name="Templeton M."/>
            <person name="Yandava C."/>
            <person name="Yarden O."/>
            <person name="Zeng Q."/>
            <person name="Rollins J.A."/>
            <person name="Lebrun M.-H."/>
            <person name="Dickman M."/>
        </authorList>
    </citation>
    <scope>NUCLEOTIDE SEQUENCE [LARGE SCALE GENOMIC DNA]</scope>
    <source>
        <strain>ATCC 18683 / 1980 / Ss-1</strain>
    </source>
</reference>
<protein>
    <recommendedName>
        <fullName>Protein yae1</fullName>
    </recommendedName>
</protein>
<organism>
    <name type="scientific">Sclerotinia sclerotiorum (strain ATCC 18683 / 1980 / Ss-1)</name>
    <name type="common">White mold</name>
    <name type="synonym">Whetzelinia sclerotiorum</name>
    <dbReference type="NCBI Taxonomy" id="665079"/>
    <lineage>
        <taxon>Eukaryota</taxon>
        <taxon>Fungi</taxon>
        <taxon>Dikarya</taxon>
        <taxon>Ascomycota</taxon>
        <taxon>Pezizomycotina</taxon>
        <taxon>Leotiomycetes</taxon>
        <taxon>Helotiales</taxon>
        <taxon>Sclerotiniaceae</taxon>
        <taxon>Sclerotinia</taxon>
    </lineage>
</organism>
<gene>
    <name type="primary">yae1</name>
    <name type="ORF">SS1G_02581</name>
</gene>
<feature type="chain" id="PRO_0000324434" description="Protein yae1">
    <location>
        <begin position="1"/>
        <end position="243"/>
    </location>
</feature>
<feature type="region of interest" description="Disordered" evidence="3">
    <location>
        <begin position="36"/>
        <end position="60"/>
    </location>
</feature>
<feature type="region of interest" description="deca-GX3 motif; required for interaction with LTO1" evidence="1">
    <location>
        <begin position="73"/>
        <end position="113"/>
    </location>
</feature>
<sequence>MFRDHEFPLSSGAFSILTSESAVLNDDFDDVFGSEPGSPAFDVRDGHDGDTFGGGNTEISDIPRLKEKHETEGYRDGVTKGKAESVQKGFDEGYGLGAVLGLRIGKVIGILEGIFGAVSVSAAKSEDTKWTDERSRLEELFKSAKEELKTEKVFAREWWGEDGIWKFEVPGEKEGKDVVFPDVAAAHPLLKKWEGLVEEEIQRWSLDLEFMEGNEEEAVPAKQQIKADAVEQKMGTVKTDLNW</sequence>
<name>YAE1_SCLS1</name>
<evidence type="ECO:0000250" key="1">
    <source>
        <dbReference type="UniProtKB" id="P47118"/>
    </source>
</evidence>
<evidence type="ECO:0000250" key="2">
    <source>
        <dbReference type="UniProtKB" id="Q9NRH1"/>
    </source>
</evidence>
<evidence type="ECO:0000256" key="3">
    <source>
        <dbReference type="SAM" id="MobiDB-lite"/>
    </source>
</evidence>
<evidence type="ECO:0000305" key="4"/>
<accession>A7EB95</accession>
<proteinExistence type="inferred from homology"/>
<dbReference type="EMBL" id="CH476623">
    <property type="protein sequence ID" value="EDN99723.1"/>
    <property type="molecule type" value="Genomic_DNA"/>
</dbReference>
<dbReference type="RefSeq" id="XP_001596361.1">
    <property type="nucleotide sequence ID" value="XM_001596311.1"/>
</dbReference>
<dbReference type="STRING" id="665079.A7EB95"/>
<dbReference type="EnsemblFungi" id="EDN99723">
    <property type="protein sequence ID" value="EDN99723"/>
    <property type="gene ID" value="SS1G_02581"/>
</dbReference>
<dbReference type="GeneID" id="5492121"/>
<dbReference type="KEGG" id="ssl:SS1G_02581"/>
<dbReference type="VEuPathDB" id="FungiDB:sscle_04g035630"/>
<dbReference type="eggNOG" id="KOG4774">
    <property type="taxonomic scope" value="Eukaryota"/>
</dbReference>
<dbReference type="HOGENOM" id="CLU_066684_0_1_1"/>
<dbReference type="InParanoid" id="A7EB95"/>
<dbReference type="OMA" id="MHFQPVE"/>
<dbReference type="OrthoDB" id="20086at2759"/>
<dbReference type="Proteomes" id="UP000001312">
    <property type="component" value="Unassembled WGS sequence"/>
</dbReference>
<dbReference type="GO" id="GO:0005737">
    <property type="term" value="C:cytoplasm"/>
    <property type="evidence" value="ECO:0007669"/>
    <property type="project" value="UniProtKB-SubCell"/>
</dbReference>
<dbReference type="GO" id="GO:0005634">
    <property type="term" value="C:nucleus"/>
    <property type="evidence" value="ECO:0007669"/>
    <property type="project" value="UniProtKB-SubCell"/>
</dbReference>
<dbReference type="GO" id="GO:0051604">
    <property type="term" value="P:protein maturation"/>
    <property type="evidence" value="ECO:0000250"/>
    <property type="project" value="UniProtKB"/>
</dbReference>
<dbReference type="InterPro" id="IPR019191">
    <property type="entry name" value="Essential_protein_Yae1_N"/>
</dbReference>
<dbReference type="InterPro" id="IPR038881">
    <property type="entry name" value="Yae1-like"/>
</dbReference>
<dbReference type="PANTHER" id="PTHR18829">
    <property type="entry name" value="PROTEIN YAE1 HOMOLOG"/>
    <property type="match status" value="1"/>
</dbReference>
<dbReference type="PANTHER" id="PTHR18829:SF0">
    <property type="entry name" value="PROTEIN YAE1 HOMOLOG"/>
    <property type="match status" value="1"/>
</dbReference>
<dbReference type="Pfam" id="PF09811">
    <property type="entry name" value="Yae1_N"/>
    <property type="match status" value="1"/>
</dbReference>
<keyword id="KW-0963">Cytoplasm</keyword>
<keyword id="KW-0539">Nucleus</keyword>
<keyword id="KW-1185">Reference proteome</keyword>
<comment type="function">
    <text evidence="2">The complex LTO1:YAE1 may function as a target specific adapter that probably recruits apo-RPLI1 to the cytosolic iron-sulfur protein assembly (CIA) complex machinery. May be required for biogenesis of the large ribosomal subunit and initiation of translation.</text>
</comment>
<comment type="subunit">
    <text evidence="2">May form a complex with LTO1.</text>
</comment>
<comment type="subcellular location">
    <subcellularLocation>
        <location evidence="1">Cytoplasm</location>
    </subcellularLocation>
    <subcellularLocation>
        <location evidence="1">Nucleus</location>
    </subcellularLocation>
</comment>
<comment type="similarity">
    <text evidence="4">Belongs to the YAE1 family.</text>
</comment>